<evidence type="ECO:0000250" key="1">
    <source>
        <dbReference type="UniProtKB" id="O26981"/>
    </source>
</evidence>
<evidence type="ECO:0000250" key="2">
    <source>
        <dbReference type="UniProtKB" id="P0AA25"/>
    </source>
</evidence>
<evidence type="ECO:0000305" key="3"/>
<proteinExistence type="inferred from homology"/>
<name>THIRX_METJA</name>
<dbReference type="EMBL" id="L77117">
    <property type="protein sequence ID" value="AAB98575.1"/>
    <property type="molecule type" value="Genomic_DNA"/>
</dbReference>
<dbReference type="PIR" id="E64372">
    <property type="entry name" value="E64372"/>
</dbReference>
<dbReference type="SMR" id="Q58001"/>
<dbReference type="STRING" id="243232.MJ_0581"/>
<dbReference type="PaxDb" id="243232-MJ_0581"/>
<dbReference type="EnsemblBacteria" id="AAB98575">
    <property type="protein sequence ID" value="AAB98575"/>
    <property type="gene ID" value="MJ_0581"/>
</dbReference>
<dbReference type="KEGG" id="mja:MJ_0581"/>
<dbReference type="eggNOG" id="arCOG02713">
    <property type="taxonomic scope" value="Archaea"/>
</dbReference>
<dbReference type="HOGENOM" id="CLU_090389_18_1_2"/>
<dbReference type="InParanoid" id="Q58001"/>
<dbReference type="PhylomeDB" id="Q58001"/>
<dbReference type="Proteomes" id="UP000000805">
    <property type="component" value="Chromosome"/>
</dbReference>
<dbReference type="GO" id="GO:0015035">
    <property type="term" value="F:protein-disulfide reductase activity"/>
    <property type="evidence" value="ECO:0000250"/>
    <property type="project" value="UniProtKB"/>
</dbReference>
<dbReference type="FunFam" id="3.40.30.10:FF:000637">
    <property type="entry name" value="Thioredoxin"/>
    <property type="match status" value="1"/>
</dbReference>
<dbReference type="Gene3D" id="3.40.30.10">
    <property type="entry name" value="Glutaredoxin"/>
    <property type="match status" value="1"/>
</dbReference>
<dbReference type="InterPro" id="IPR012336">
    <property type="entry name" value="Thioredoxin-like_fold"/>
</dbReference>
<dbReference type="InterPro" id="IPR036249">
    <property type="entry name" value="Thioredoxin-like_sf"/>
</dbReference>
<dbReference type="InterPro" id="IPR005243">
    <property type="entry name" value="THIRX-like_proc"/>
</dbReference>
<dbReference type="NCBIfam" id="TIGR00412">
    <property type="entry name" value="redox_disulf_2"/>
    <property type="match status" value="1"/>
</dbReference>
<dbReference type="PANTHER" id="PTHR36450">
    <property type="entry name" value="THIOREDOXIN"/>
    <property type="match status" value="1"/>
</dbReference>
<dbReference type="PANTHER" id="PTHR36450:SF1">
    <property type="entry name" value="THIOREDOXIN"/>
    <property type="match status" value="1"/>
</dbReference>
<dbReference type="Pfam" id="PF13192">
    <property type="entry name" value="Thioredoxin_3"/>
    <property type="match status" value="1"/>
</dbReference>
<dbReference type="PIRSF" id="PIRSF037031">
    <property type="entry name" value="Redox_disulphide_2"/>
    <property type="match status" value="1"/>
</dbReference>
<dbReference type="SUPFAM" id="SSF52833">
    <property type="entry name" value="Thioredoxin-like"/>
    <property type="match status" value="1"/>
</dbReference>
<accession>Q58001</accession>
<organism>
    <name type="scientific">Methanocaldococcus jannaschii (strain ATCC 43067 / DSM 2661 / JAL-1 / JCM 10045 / NBRC 100440)</name>
    <name type="common">Methanococcus jannaschii</name>
    <dbReference type="NCBI Taxonomy" id="243232"/>
    <lineage>
        <taxon>Archaea</taxon>
        <taxon>Methanobacteriati</taxon>
        <taxon>Methanobacteriota</taxon>
        <taxon>Methanomada group</taxon>
        <taxon>Methanococci</taxon>
        <taxon>Methanococcales</taxon>
        <taxon>Methanocaldococcaceae</taxon>
        <taxon>Methanocaldococcus</taxon>
    </lineage>
</organism>
<gene>
    <name type="ordered locus">MJ0581</name>
</gene>
<feature type="chain" id="PRO_0000141653" description="Thioredoxin">
    <location>
        <begin position="1"/>
        <end position="86"/>
    </location>
</feature>
<feature type="active site" description="Nucleophile" evidence="2">
    <location>
        <position position="15"/>
    </location>
</feature>
<feature type="active site" description="Nucleophile" evidence="2">
    <location>
        <position position="18"/>
    </location>
</feature>
<feature type="disulfide bond" description="Redox-active" evidence="1">
    <location>
        <begin position="15"/>
        <end position="18"/>
    </location>
</feature>
<keyword id="KW-1015">Disulfide bond</keyword>
<keyword id="KW-0249">Electron transport</keyword>
<keyword id="KW-0676">Redox-active center</keyword>
<keyword id="KW-1185">Reference proteome</keyword>
<keyword id="KW-0813">Transport</keyword>
<protein>
    <recommendedName>
        <fullName evidence="1">Thioredoxin</fullName>
    </recommendedName>
</protein>
<sequence length="86" mass="9634">MVRVMVVIRIFGTGCPKCNQTYENVKKAVEELGIDAEIVKVTDVNEIAEWVFVTPGVAFDDVIVFEGKIPSVEEIKEELKSYLEGK</sequence>
<reference key="1">
    <citation type="journal article" date="1996" name="Science">
        <title>Complete genome sequence of the methanogenic archaeon, Methanococcus jannaschii.</title>
        <authorList>
            <person name="Bult C.J."/>
            <person name="White O."/>
            <person name="Olsen G.J."/>
            <person name="Zhou L."/>
            <person name="Fleischmann R.D."/>
            <person name="Sutton G.G."/>
            <person name="Blake J.A."/>
            <person name="FitzGerald L.M."/>
            <person name="Clayton R.A."/>
            <person name="Gocayne J.D."/>
            <person name="Kerlavage A.R."/>
            <person name="Dougherty B.A."/>
            <person name="Tomb J.-F."/>
            <person name="Adams M.D."/>
            <person name="Reich C.I."/>
            <person name="Overbeek R."/>
            <person name="Kirkness E.F."/>
            <person name="Weinstock K.G."/>
            <person name="Merrick J.M."/>
            <person name="Glodek A."/>
            <person name="Scott J.L."/>
            <person name="Geoghagen N.S.M."/>
            <person name="Weidman J.F."/>
            <person name="Fuhrmann J.L."/>
            <person name="Nguyen D."/>
            <person name="Utterback T.R."/>
            <person name="Kelley J.M."/>
            <person name="Peterson J.D."/>
            <person name="Sadow P.W."/>
            <person name="Hanna M.C."/>
            <person name="Cotton M.D."/>
            <person name="Roberts K.M."/>
            <person name="Hurst M.A."/>
            <person name="Kaine B.P."/>
            <person name="Borodovsky M."/>
            <person name="Klenk H.-P."/>
            <person name="Fraser C.M."/>
            <person name="Smith H.O."/>
            <person name="Woese C.R."/>
            <person name="Venter J.C."/>
        </authorList>
    </citation>
    <scope>NUCLEOTIDE SEQUENCE [LARGE SCALE GENOMIC DNA]</scope>
    <source>
        <strain>ATCC 43067 / DSM 2661 / JAL-1 / JCM 10045 / NBRC 100440</strain>
    </source>
</reference>
<comment type="function">
    <text evidence="1">Does not function as a glutathione-disulfide oxidoreductase in the presence of glutathione and glutathione reductase (By similarity). Has low thioredoxin activity in vitro (By similarity).</text>
</comment>
<comment type="similarity">
    <text evidence="3">Belongs to the glutaredoxin family.</text>
</comment>